<sequence>MAKEKFERTKPHVNVGTIGHVDHGKTTLTAAIATVLSKAFGGEAKAYDQIDAAPEEKARGITINTAHVEYETANRHYAHVDCPGHADYVKNMITGAAQMDGAILVCSAADGPMPQTREHILLARQVGVPYIVVFLNKCDMVDDAELLELVEMEVRELLSKYDFPGDDTPIIQGSAKLALEGDEGPMGKEAIMKLAEALDTYIPTPERAIDGAFLMPVEDVFSISGRGTVVTGRIERGIVKVGEEIEIIGIKPTLKTTCTGVEMFRKLLDQGQAGDNVGILLRGTKREEVERGQVLAKPGSITPHTHFTAEVYILGKDEGGRHTPFFNNYRPQFYFRTTDVTGSIELPKDKEMVMPGDNVTITVKLIAPIAMEEGLRFAIREGGRTVGAGVVAKILA</sequence>
<protein>
    <recommendedName>
        <fullName evidence="2">Elongation factor Tu</fullName>
        <shortName evidence="2">EF-Tu</shortName>
        <ecNumber evidence="2">3.6.5.3</ecNumber>
    </recommendedName>
</protein>
<name>EFTU_POLAQ</name>
<accession>A4SUU7</accession>
<feature type="chain" id="PRO_0000337466" description="Elongation factor Tu">
    <location>
        <begin position="1"/>
        <end position="396"/>
    </location>
</feature>
<feature type="domain" description="tr-type G">
    <location>
        <begin position="10"/>
        <end position="206"/>
    </location>
</feature>
<feature type="region of interest" description="G1" evidence="1">
    <location>
        <begin position="19"/>
        <end position="26"/>
    </location>
</feature>
<feature type="region of interest" description="G2" evidence="1">
    <location>
        <begin position="60"/>
        <end position="64"/>
    </location>
</feature>
<feature type="region of interest" description="G3" evidence="1">
    <location>
        <begin position="81"/>
        <end position="84"/>
    </location>
</feature>
<feature type="region of interest" description="G4" evidence="1">
    <location>
        <begin position="136"/>
        <end position="139"/>
    </location>
</feature>
<feature type="region of interest" description="G5" evidence="1">
    <location>
        <begin position="174"/>
        <end position="176"/>
    </location>
</feature>
<feature type="binding site" evidence="2">
    <location>
        <begin position="19"/>
        <end position="26"/>
    </location>
    <ligand>
        <name>GTP</name>
        <dbReference type="ChEBI" id="CHEBI:37565"/>
    </ligand>
</feature>
<feature type="binding site" evidence="2">
    <location>
        <position position="26"/>
    </location>
    <ligand>
        <name>Mg(2+)</name>
        <dbReference type="ChEBI" id="CHEBI:18420"/>
    </ligand>
</feature>
<feature type="binding site" evidence="2">
    <location>
        <begin position="81"/>
        <end position="85"/>
    </location>
    <ligand>
        <name>GTP</name>
        <dbReference type="ChEBI" id="CHEBI:37565"/>
    </ligand>
</feature>
<feature type="binding site" evidence="2">
    <location>
        <begin position="136"/>
        <end position="139"/>
    </location>
    <ligand>
        <name>GTP</name>
        <dbReference type="ChEBI" id="CHEBI:37565"/>
    </ligand>
</feature>
<proteinExistence type="inferred from homology"/>
<gene>
    <name evidence="2" type="primary">tuf1</name>
    <name type="ordered locus">Pnuc_0039</name>
</gene>
<gene>
    <name evidence="2" type="primary">tuf2</name>
    <name type="ordered locus">Pnuc_0051</name>
</gene>
<organism>
    <name type="scientific">Polynucleobacter asymbioticus (strain DSM 18221 / CIP 109841 / QLW-P1DMWA-1)</name>
    <name type="common">Polynucleobacter necessarius subsp. asymbioticus</name>
    <dbReference type="NCBI Taxonomy" id="312153"/>
    <lineage>
        <taxon>Bacteria</taxon>
        <taxon>Pseudomonadati</taxon>
        <taxon>Pseudomonadota</taxon>
        <taxon>Betaproteobacteria</taxon>
        <taxon>Burkholderiales</taxon>
        <taxon>Burkholderiaceae</taxon>
        <taxon>Polynucleobacter</taxon>
    </lineage>
</organism>
<reference key="1">
    <citation type="journal article" date="2012" name="Stand. Genomic Sci.">
        <title>Complete genome sequence of Polynucleobacter necessarius subsp. asymbioticus type strain (QLW-P1DMWA-1(T)).</title>
        <authorList>
            <person name="Meincke L."/>
            <person name="Copeland A."/>
            <person name="Lapidus A."/>
            <person name="Lucas S."/>
            <person name="Berry K.W."/>
            <person name="Del Rio T.G."/>
            <person name="Hammon N."/>
            <person name="Dalin E."/>
            <person name="Tice H."/>
            <person name="Pitluck S."/>
            <person name="Richardson P."/>
            <person name="Bruce D."/>
            <person name="Goodwin L."/>
            <person name="Han C."/>
            <person name="Tapia R."/>
            <person name="Detter J.C."/>
            <person name="Schmutz J."/>
            <person name="Brettin T."/>
            <person name="Larimer F."/>
            <person name="Land M."/>
            <person name="Hauser L."/>
            <person name="Kyrpides N.C."/>
            <person name="Ivanova N."/>
            <person name="Goker M."/>
            <person name="Woyke T."/>
            <person name="Wu Q.L."/>
            <person name="Pockl M."/>
            <person name="Hahn M.W."/>
            <person name="Klenk H.P."/>
        </authorList>
    </citation>
    <scope>NUCLEOTIDE SEQUENCE [LARGE SCALE GENOMIC DNA]</scope>
    <source>
        <strain>DSM 18221 / CIP 109841 / QLW-P1DMWA-1</strain>
    </source>
</reference>
<comment type="function">
    <text evidence="2">GTP hydrolase that promotes the GTP-dependent binding of aminoacyl-tRNA to the A-site of ribosomes during protein biosynthesis.</text>
</comment>
<comment type="catalytic activity">
    <reaction evidence="2">
        <text>GTP + H2O = GDP + phosphate + H(+)</text>
        <dbReference type="Rhea" id="RHEA:19669"/>
        <dbReference type="ChEBI" id="CHEBI:15377"/>
        <dbReference type="ChEBI" id="CHEBI:15378"/>
        <dbReference type="ChEBI" id="CHEBI:37565"/>
        <dbReference type="ChEBI" id="CHEBI:43474"/>
        <dbReference type="ChEBI" id="CHEBI:58189"/>
        <dbReference type="EC" id="3.6.5.3"/>
    </reaction>
    <physiologicalReaction direction="left-to-right" evidence="2">
        <dbReference type="Rhea" id="RHEA:19670"/>
    </physiologicalReaction>
</comment>
<comment type="subunit">
    <text evidence="2">Monomer.</text>
</comment>
<comment type="subcellular location">
    <subcellularLocation>
        <location evidence="2">Cytoplasm</location>
    </subcellularLocation>
</comment>
<comment type="similarity">
    <text evidence="2">Belongs to the TRAFAC class translation factor GTPase superfamily. Classic translation factor GTPase family. EF-Tu/EF-1A subfamily.</text>
</comment>
<dbReference type="EC" id="3.6.5.3" evidence="2"/>
<dbReference type="EMBL" id="CP000655">
    <property type="protein sequence ID" value="ABP33261.1"/>
    <property type="molecule type" value="Genomic_DNA"/>
</dbReference>
<dbReference type="EMBL" id="CP000655">
    <property type="protein sequence ID" value="ABP33273.1"/>
    <property type="molecule type" value="Genomic_DNA"/>
</dbReference>
<dbReference type="SMR" id="A4SUU7"/>
<dbReference type="GeneID" id="31480397"/>
<dbReference type="KEGG" id="pnu:Pnuc_0039"/>
<dbReference type="KEGG" id="pnu:Pnuc_0051"/>
<dbReference type="eggNOG" id="COG0050">
    <property type="taxonomic scope" value="Bacteria"/>
</dbReference>
<dbReference type="HOGENOM" id="CLU_007265_0_0_4"/>
<dbReference type="Proteomes" id="UP000000231">
    <property type="component" value="Chromosome"/>
</dbReference>
<dbReference type="GO" id="GO:0005829">
    <property type="term" value="C:cytosol"/>
    <property type="evidence" value="ECO:0007669"/>
    <property type="project" value="TreeGrafter"/>
</dbReference>
<dbReference type="GO" id="GO:0005525">
    <property type="term" value="F:GTP binding"/>
    <property type="evidence" value="ECO:0007669"/>
    <property type="project" value="UniProtKB-UniRule"/>
</dbReference>
<dbReference type="GO" id="GO:0003924">
    <property type="term" value="F:GTPase activity"/>
    <property type="evidence" value="ECO:0007669"/>
    <property type="project" value="InterPro"/>
</dbReference>
<dbReference type="GO" id="GO:0097216">
    <property type="term" value="F:guanosine tetraphosphate binding"/>
    <property type="evidence" value="ECO:0007669"/>
    <property type="project" value="UniProtKB-ARBA"/>
</dbReference>
<dbReference type="GO" id="GO:0003746">
    <property type="term" value="F:translation elongation factor activity"/>
    <property type="evidence" value="ECO:0007669"/>
    <property type="project" value="UniProtKB-UniRule"/>
</dbReference>
<dbReference type="CDD" id="cd01884">
    <property type="entry name" value="EF_Tu"/>
    <property type="match status" value="1"/>
</dbReference>
<dbReference type="CDD" id="cd03697">
    <property type="entry name" value="EFTU_II"/>
    <property type="match status" value="1"/>
</dbReference>
<dbReference type="CDD" id="cd03707">
    <property type="entry name" value="EFTU_III"/>
    <property type="match status" value="1"/>
</dbReference>
<dbReference type="FunFam" id="2.40.30.10:FF:000001">
    <property type="entry name" value="Elongation factor Tu"/>
    <property type="match status" value="1"/>
</dbReference>
<dbReference type="FunFam" id="3.40.50.300:FF:000003">
    <property type="entry name" value="Elongation factor Tu"/>
    <property type="match status" value="1"/>
</dbReference>
<dbReference type="Gene3D" id="3.40.50.300">
    <property type="entry name" value="P-loop containing nucleotide triphosphate hydrolases"/>
    <property type="match status" value="1"/>
</dbReference>
<dbReference type="Gene3D" id="2.40.30.10">
    <property type="entry name" value="Translation factors"/>
    <property type="match status" value="2"/>
</dbReference>
<dbReference type="HAMAP" id="MF_00118_B">
    <property type="entry name" value="EF_Tu_B"/>
    <property type="match status" value="1"/>
</dbReference>
<dbReference type="InterPro" id="IPR041709">
    <property type="entry name" value="EF-Tu_GTP-bd"/>
</dbReference>
<dbReference type="InterPro" id="IPR050055">
    <property type="entry name" value="EF-Tu_GTPase"/>
</dbReference>
<dbReference type="InterPro" id="IPR004161">
    <property type="entry name" value="EFTu-like_2"/>
</dbReference>
<dbReference type="InterPro" id="IPR033720">
    <property type="entry name" value="EFTU_2"/>
</dbReference>
<dbReference type="InterPro" id="IPR031157">
    <property type="entry name" value="G_TR_CS"/>
</dbReference>
<dbReference type="InterPro" id="IPR027417">
    <property type="entry name" value="P-loop_NTPase"/>
</dbReference>
<dbReference type="InterPro" id="IPR005225">
    <property type="entry name" value="Small_GTP-bd"/>
</dbReference>
<dbReference type="InterPro" id="IPR000795">
    <property type="entry name" value="T_Tr_GTP-bd_dom"/>
</dbReference>
<dbReference type="InterPro" id="IPR009000">
    <property type="entry name" value="Transl_B-barrel_sf"/>
</dbReference>
<dbReference type="InterPro" id="IPR009001">
    <property type="entry name" value="Transl_elong_EF1A/Init_IF2_C"/>
</dbReference>
<dbReference type="InterPro" id="IPR004541">
    <property type="entry name" value="Transl_elong_EFTu/EF1A_bac/org"/>
</dbReference>
<dbReference type="InterPro" id="IPR004160">
    <property type="entry name" value="Transl_elong_EFTu/EF1A_C"/>
</dbReference>
<dbReference type="NCBIfam" id="TIGR00485">
    <property type="entry name" value="EF-Tu"/>
    <property type="match status" value="1"/>
</dbReference>
<dbReference type="NCBIfam" id="NF000766">
    <property type="entry name" value="PRK00049.1"/>
    <property type="match status" value="1"/>
</dbReference>
<dbReference type="NCBIfam" id="NF009372">
    <property type="entry name" value="PRK12735.1"/>
    <property type="match status" value="1"/>
</dbReference>
<dbReference type="NCBIfam" id="NF009373">
    <property type="entry name" value="PRK12736.1"/>
    <property type="match status" value="1"/>
</dbReference>
<dbReference type="NCBIfam" id="TIGR00231">
    <property type="entry name" value="small_GTP"/>
    <property type="match status" value="1"/>
</dbReference>
<dbReference type="PANTHER" id="PTHR43721:SF22">
    <property type="entry name" value="ELONGATION FACTOR TU, MITOCHONDRIAL"/>
    <property type="match status" value="1"/>
</dbReference>
<dbReference type="PANTHER" id="PTHR43721">
    <property type="entry name" value="ELONGATION FACTOR TU-RELATED"/>
    <property type="match status" value="1"/>
</dbReference>
<dbReference type="Pfam" id="PF00009">
    <property type="entry name" value="GTP_EFTU"/>
    <property type="match status" value="1"/>
</dbReference>
<dbReference type="Pfam" id="PF03144">
    <property type="entry name" value="GTP_EFTU_D2"/>
    <property type="match status" value="1"/>
</dbReference>
<dbReference type="Pfam" id="PF03143">
    <property type="entry name" value="GTP_EFTU_D3"/>
    <property type="match status" value="1"/>
</dbReference>
<dbReference type="PRINTS" id="PR00315">
    <property type="entry name" value="ELONGATNFCT"/>
</dbReference>
<dbReference type="SUPFAM" id="SSF50465">
    <property type="entry name" value="EF-Tu/eEF-1alpha/eIF2-gamma C-terminal domain"/>
    <property type="match status" value="1"/>
</dbReference>
<dbReference type="SUPFAM" id="SSF52540">
    <property type="entry name" value="P-loop containing nucleoside triphosphate hydrolases"/>
    <property type="match status" value="1"/>
</dbReference>
<dbReference type="SUPFAM" id="SSF50447">
    <property type="entry name" value="Translation proteins"/>
    <property type="match status" value="1"/>
</dbReference>
<dbReference type="PROSITE" id="PS00301">
    <property type="entry name" value="G_TR_1"/>
    <property type="match status" value="1"/>
</dbReference>
<dbReference type="PROSITE" id="PS51722">
    <property type="entry name" value="G_TR_2"/>
    <property type="match status" value="1"/>
</dbReference>
<keyword id="KW-0963">Cytoplasm</keyword>
<keyword id="KW-0251">Elongation factor</keyword>
<keyword id="KW-0342">GTP-binding</keyword>
<keyword id="KW-0378">Hydrolase</keyword>
<keyword id="KW-0460">Magnesium</keyword>
<keyword id="KW-0479">Metal-binding</keyword>
<keyword id="KW-0547">Nucleotide-binding</keyword>
<keyword id="KW-0648">Protein biosynthesis</keyword>
<keyword id="KW-1185">Reference proteome</keyword>
<evidence type="ECO:0000250" key="1"/>
<evidence type="ECO:0000255" key="2">
    <source>
        <dbReference type="HAMAP-Rule" id="MF_00118"/>
    </source>
</evidence>